<dbReference type="EC" id="4.1.2.25" evidence="2"/>
<dbReference type="EC" id="5.1.99.8" evidence="2"/>
<dbReference type="EMBL" id="BX571856">
    <property type="protein sequence ID" value="CAG39538.1"/>
    <property type="molecule type" value="Genomic_DNA"/>
</dbReference>
<dbReference type="RefSeq" id="WP_001154303.1">
    <property type="nucleotide sequence ID" value="NC_002952.2"/>
</dbReference>
<dbReference type="SMR" id="Q6GJF6"/>
<dbReference type="KEGG" id="sar:SAR0516"/>
<dbReference type="HOGENOM" id="CLU_112632_1_3_9"/>
<dbReference type="UniPathway" id="UPA00077">
    <property type="reaction ID" value="UER00154"/>
</dbReference>
<dbReference type="Proteomes" id="UP000000596">
    <property type="component" value="Chromosome"/>
</dbReference>
<dbReference type="GO" id="GO:0005737">
    <property type="term" value="C:cytoplasm"/>
    <property type="evidence" value="ECO:0007669"/>
    <property type="project" value="TreeGrafter"/>
</dbReference>
<dbReference type="GO" id="GO:0004150">
    <property type="term" value="F:dihydroneopterin aldolase activity"/>
    <property type="evidence" value="ECO:0007669"/>
    <property type="project" value="UniProtKB-EC"/>
</dbReference>
<dbReference type="GO" id="GO:0016853">
    <property type="term" value="F:isomerase activity"/>
    <property type="evidence" value="ECO:0007669"/>
    <property type="project" value="UniProtKB-KW"/>
</dbReference>
<dbReference type="GO" id="GO:0046656">
    <property type="term" value="P:folic acid biosynthetic process"/>
    <property type="evidence" value="ECO:0007669"/>
    <property type="project" value="UniProtKB-KW"/>
</dbReference>
<dbReference type="GO" id="GO:0046654">
    <property type="term" value="P:tetrahydrofolate biosynthetic process"/>
    <property type="evidence" value="ECO:0007669"/>
    <property type="project" value="UniProtKB-UniPathway"/>
</dbReference>
<dbReference type="CDD" id="cd00534">
    <property type="entry name" value="DHNA_DHNTPE"/>
    <property type="match status" value="1"/>
</dbReference>
<dbReference type="FunFam" id="3.30.1130.10:FF:000003">
    <property type="entry name" value="7,8-dihydroneopterin aldolase"/>
    <property type="match status" value="1"/>
</dbReference>
<dbReference type="Gene3D" id="3.30.1130.10">
    <property type="match status" value="1"/>
</dbReference>
<dbReference type="InterPro" id="IPR006156">
    <property type="entry name" value="Dihydroneopterin_aldolase"/>
</dbReference>
<dbReference type="InterPro" id="IPR006157">
    <property type="entry name" value="FolB_dom"/>
</dbReference>
<dbReference type="InterPro" id="IPR043133">
    <property type="entry name" value="GTP-CH-I_C/QueF"/>
</dbReference>
<dbReference type="NCBIfam" id="TIGR00525">
    <property type="entry name" value="folB"/>
    <property type="match status" value="1"/>
</dbReference>
<dbReference type="NCBIfam" id="TIGR00526">
    <property type="entry name" value="folB_dom"/>
    <property type="match status" value="1"/>
</dbReference>
<dbReference type="PANTHER" id="PTHR42844">
    <property type="entry name" value="DIHYDRONEOPTERIN ALDOLASE 1-RELATED"/>
    <property type="match status" value="1"/>
</dbReference>
<dbReference type="PANTHER" id="PTHR42844:SF1">
    <property type="entry name" value="DIHYDRONEOPTERIN ALDOLASE 1-RELATED"/>
    <property type="match status" value="1"/>
</dbReference>
<dbReference type="Pfam" id="PF02152">
    <property type="entry name" value="FolB"/>
    <property type="match status" value="1"/>
</dbReference>
<dbReference type="SMART" id="SM00905">
    <property type="entry name" value="FolB"/>
    <property type="match status" value="1"/>
</dbReference>
<dbReference type="SUPFAM" id="SSF55620">
    <property type="entry name" value="Tetrahydrobiopterin biosynthesis enzymes-like"/>
    <property type="match status" value="1"/>
</dbReference>
<sequence length="121" mass="13751">MQDTIFLKGMRFYGYHGALSAENEIGQIFKVDVTLKVDLSEAGRTDNVIDTVHYGEVFEEVKSIMEGKAVNLLEHLAERIANRINSQYNRVMETKVRITKENPPIPGHYDGVGIEIVRENK</sequence>
<reference key="1">
    <citation type="journal article" date="2004" name="Proc. Natl. Acad. Sci. U.S.A.">
        <title>Complete genomes of two clinical Staphylococcus aureus strains: evidence for the rapid evolution of virulence and drug resistance.</title>
        <authorList>
            <person name="Holden M.T.G."/>
            <person name="Feil E.J."/>
            <person name="Lindsay J.A."/>
            <person name="Peacock S.J."/>
            <person name="Day N.P.J."/>
            <person name="Enright M.C."/>
            <person name="Foster T.J."/>
            <person name="Moore C.E."/>
            <person name="Hurst L."/>
            <person name="Atkin R."/>
            <person name="Barron A."/>
            <person name="Bason N."/>
            <person name="Bentley S.D."/>
            <person name="Chillingworth C."/>
            <person name="Chillingworth T."/>
            <person name="Churcher C."/>
            <person name="Clark L."/>
            <person name="Corton C."/>
            <person name="Cronin A."/>
            <person name="Doggett J."/>
            <person name="Dowd L."/>
            <person name="Feltwell T."/>
            <person name="Hance Z."/>
            <person name="Harris B."/>
            <person name="Hauser H."/>
            <person name="Holroyd S."/>
            <person name="Jagels K."/>
            <person name="James K.D."/>
            <person name="Lennard N."/>
            <person name="Line A."/>
            <person name="Mayes R."/>
            <person name="Moule S."/>
            <person name="Mungall K."/>
            <person name="Ormond D."/>
            <person name="Quail M.A."/>
            <person name="Rabbinowitsch E."/>
            <person name="Rutherford K.M."/>
            <person name="Sanders M."/>
            <person name="Sharp S."/>
            <person name="Simmonds M."/>
            <person name="Stevens K."/>
            <person name="Whitehead S."/>
            <person name="Barrell B.G."/>
            <person name="Spratt B.G."/>
            <person name="Parkhill J."/>
        </authorList>
    </citation>
    <scope>NUCLEOTIDE SEQUENCE [LARGE SCALE GENOMIC DNA]</scope>
    <source>
        <strain>MRSA252</strain>
    </source>
</reference>
<protein>
    <recommendedName>
        <fullName>Dihydroneopterin aldolase</fullName>
        <shortName>DHNA</shortName>
        <ecNumber evidence="2">4.1.2.25</ecNumber>
    </recommendedName>
    <alternativeName>
        <fullName>7,8-dihydroneopterin 2'-epimerase</fullName>
    </alternativeName>
    <alternativeName>
        <fullName>7,8-dihydroneopterin aldolase</fullName>
    </alternativeName>
    <alternativeName>
        <fullName>7,8-dihydroneopterin epimerase</fullName>
        <ecNumber evidence="2">5.1.99.8</ecNumber>
    </alternativeName>
    <alternativeName>
        <fullName>Dihydroneopterin epimerase</fullName>
    </alternativeName>
</protein>
<accession>Q6GJF6</accession>
<organism>
    <name type="scientific">Staphylococcus aureus (strain MRSA252)</name>
    <dbReference type="NCBI Taxonomy" id="282458"/>
    <lineage>
        <taxon>Bacteria</taxon>
        <taxon>Bacillati</taxon>
        <taxon>Bacillota</taxon>
        <taxon>Bacilli</taxon>
        <taxon>Bacillales</taxon>
        <taxon>Staphylococcaceae</taxon>
        <taxon>Staphylococcus</taxon>
    </lineage>
</organism>
<name>FOLB_STAAR</name>
<keyword id="KW-0289">Folate biosynthesis</keyword>
<keyword id="KW-0413">Isomerase</keyword>
<keyword id="KW-0456">Lyase</keyword>
<evidence type="ECO:0000250" key="1"/>
<evidence type="ECO:0000250" key="2">
    <source>
        <dbReference type="UniProtKB" id="P0AC16"/>
    </source>
</evidence>
<evidence type="ECO:0000250" key="3">
    <source>
        <dbReference type="UniProtKB" id="P56740"/>
    </source>
</evidence>
<evidence type="ECO:0000305" key="4"/>
<comment type="function">
    <text evidence="3">Catalyzes the conversion of 7,8-dihydroneopterin to 6-hydroxymethyl-7,8-dihydropterin. Can also catalyze the epimerization of carbon 2' of dihydroneopterin to dihydromonapterin.</text>
</comment>
<comment type="catalytic activity">
    <reaction evidence="3">
        <text>7,8-dihydroneopterin = 6-hydroxymethyl-7,8-dihydropterin + glycolaldehyde</text>
        <dbReference type="Rhea" id="RHEA:10540"/>
        <dbReference type="ChEBI" id="CHEBI:17001"/>
        <dbReference type="ChEBI" id="CHEBI:17071"/>
        <dbReference type="ChEBI" id="CHEBI:44841"/>
        <dbReference type="EC" id="4.1.2.25"/>
    </reaction>
</comment>
<comment type="catalytic activity">
    <reaction evidence="2">
        <text>7,8-dihydroneopterin = 7,8-dihydromonapterin</text>
        <dbReference type="Rhea" id="RHEA:45328"/>
        <dbReference type="ChEBI" id="CHEBI:17001"/>
        <dbReference type="ChEBI" id="CHEBI:71175"/>
        <dbReference type="EC" id="5.1.99.8"/>
    </reaction>
</comment>
<comment type="pathway">
    <text>Cofactor biosynthesis; tetrahydrofolate biosynthesis; 2-amino-4-hydroxy-6-hydroxymethyl-7,8-dihydropteridine diphosphate from 7,8-dihydroneopterin triphosphate: step 3/4.</text>
</comment>
<comment type="subunit">
    <text evidence="1">Homooctamer. Four molecules assemble into a ring, and two rings come together to give a cylinder with a hole of at least 13 a diameter (By similarity).</text>
</comment>
<comment type="similarity">
    <text evidence="4">Belongs to the DHNA family.</text>
</comment>
<gene>
    <name type="primary">folB</name>
    <name type="ordered locus">SAR0516</name>
</gene>
<proteinExistence type="inferred from homology"/>
<feature type="chain" id="PRO_0000168280" description="Dihydroneopterin aldolase">
    <location>
        <begin position="1"/>
        <end position="121"/>
    </location>
</feature>
<feature type="active site" description="Proton donor/acceptor" evidence="3">
    <location>
        <position position="100"/>
    </location>
</feature>
<feature type="binding site" evidence="3">
    <location>
        <position position="22"/>
    </location>
    <ligand>
        <name>substrate</name>
    </ligand>
</feature>
<feature type="binding site" evidence="3">
    <location>
        <position position="54"/>
    </location>
    <ligand>
        <name>substrate</name>
    </ligand>
</feature>
<feature type="binding site" evidence="3">
    <location>
        <begin position="73"/>
        <end position="74"/>
    </location>
    <ligand>
        <name>substrate</name>
    </ligand>
</feature>